<name>TSTF_DICDI</name>
<sequence>MSSTSNENISSYVIFKSKGQHINTSYNPIDIHPIHPWIVYADSDSNIVIQNYQNNEKILNFSISQHDEEKKEQILLLQKKVPTLSALSSSASGINGTNNNNSGSNSSNNNNNNNGSLSNSPNNNNNVAFIGSTGGVDSRSASVTSIGSGGGVVTPINVNSNSNSNSPSVPTLHVIGNQTLHNRSPNNTIKLSPNSSNNDSLNNNNNNINNNSTNSNNYLNENLDKMKLGQIKFIYFYDKHTRSCKDKKPKISQNKLQNISKAQPSVGIEDYIVVVAENRIVFINYHSQRLREVKIPAFENKSPNSVEFFSNSPFVAFGGPDSMIRLWNTEKWEIEKQLAGHPKGTIVKLKAIEIEGEFLVSGGTDGFVCVWNVKTGSLATQFSKVHEIVDLSYDYVTGQVMALTQDRHIMIYDLNTLKEVSKVSCGKKEFFSIEAYYHSRFNQDLLLGMKQPAQVSFFSRSGSTKEYSIDLDALLNPSKKEKSKLYKVVQHPLQPHLLLCWLNKSVYIVSTLATSIPMQVTTFNSLSNDHTVYYPFAGYLYSSSLTNVLTCEKVQTPIQLSLNENYKLDISPSGKYLSIHAISSGNYQILEISTWKILEKGQALDVAWSGKGKDSTVDEKFGKLEKILESVDSVKKKKTLGILPSIVKSTKKEETVISKILLKTKEFNNNNVVQELLLHANEDRISGGLMLGVYHKESTNSNGTLNYGSGGSIGSGSGSGTISSGSSNLINGSVGGSSSNNSANSNNSNNNNNNNNNNSNNSNNNNNSSQPILEPPIITTGEETESKSFQLLDWWTLQPVGESLPPPLKIYWDQNQTHCAIAFTHYFFVFKLRPTFHMLCRWSLGITSAVWHNNTLFFSTHNDIQCIFPHKHESSPIILASSTGNVFPEDLYDLSSGSLSTSKPNQSFSTLPNIKPTGPISLIEVNNEGLVLLDSNYKFYCIPLTHYLLKFFILAQMEAIDLAMKCSTMVDPKYHYLMAKFLTVRGHPKECLQMNGISNFLKLQICLNNEAFETSLDIVPLITEAIKSGQSITNENNNDEEVTLSSMGKMCIEIGQRAQNKNEYPTAEKAFKLATSLEPNSAYQELALHYVFLKKMNELKELQQSISTTYPLESNLISLFLD</sequence>
<keyword id="KW-0677">Repeat</keyword>
<keyword id="KW-0853">WD repeat</keyword>
<reference key="1">
    <citation type="journal article" date="2005" name="Nature">
        <title>The genome of the social amoeba Dictyostelium discoideum.</title>
        <authorList>
            <person name="Eichinger L."/>
            <person name="Pachebat J.A."/>
            <person name="Gloeckner G."/>
            <person name="Rajandream M.A."/>
            <person name="Sucgang R."/>
            <person name="Berriman M."/>
            <person name="Song J."/>
            <person name="Olsen R."/>
            <person name="Szafranski K."/>
            <person name="Xu Q."/>
            <person name="Tunggal B."/>
            <person name="Kummerfeld S."/>
            <person name="Madera M."/>
            <person name="Konfortov B.A."/>
            <person name="Rivero F."/>
            <person name="Bankier A.T."/>
            <person name="Lehmann R."/>
            <person name="Hamlin N."/>
            <person name="Davies R."/>
            <person name="Gaudet P."/>
            <person name="Fey P."/>
            <person name="Pilcher K."/>
            <person name="Chen G."/>
            <person name="Saunders D."/>
            <person name="Sodergren E.J."/>
            <person name="Davis P."/>
            <person name="Kerhornou A."/>
            <person name="Nie X."/>
            <person name="Hall N."/>
            <person name="Anjard C."/>
            <person name="Hemphill L."/>
            <person name="Bason N."/>
            <person name="Farbrother P."/>
            <person name="Desany B."/>
            <person name="Just E."/>
            <person name="Morio T."/>
            <person name="Rost R."/>
            <person name="Churcher C.M."/>
            <person name="Cooper J."/>
            <person name="Haydock S."/>
            <person name="van Driessche N."/>
            <person name="Cronin A."/>
            <person name="Goodhead I."/>
            <person name="Muzny D.M."/>
            <person name="Mourier T."/>
            <person name="Pain A."/>
            <person name="Lu M."/>
            <person name="Harper D."/>
            <person name="Lindsay R."/>
            <person name="Hauser H."/>
            <person name="James K.D."/>
            <person name="Quiles M."/>
            <person name="Madan Babu M."/>
            <person name="Saito T."/>
            <person name="Buchrieser C."/>
            <person name="Wardroper A."/>
            <person name="Felder M."/>
            <person name="Thangavelu M."/>
            <person name="Johnson D."/>
            <person name="Knights A."/>
            <person name="Loulseged H."/>
            <person name="Mungall K.L."/>
            <person name="Oliver K."/>
            <person name="Price C."/>
            <person name="Quail M.A."/>
            <person name="Urushihara H."/>
            <person name="Hernandez J."/>
            <person name="Rabbinowitsch E."/>
            <person name="Steffen D."/>
            <person name="Sanders M."/>
            <person name="Ma J."/>
            <person name="Kohara Y."/>
            <person name="Sharp S."/>
            <person name="Simmonds M.N."/>
            <person name="Spiegler S."/>
            <person name="Tivey A."/>
            <person name="Sugano S."/>
            <person name="White B."/>
            <person name="Walker D."/>
            <person name="Woodward J.R."/>
            <person name="Winckler T."/>
            <person name="Tanaka Y."/>
            <person name="Shaulsky G."/>
            <person name="Schleicher M."/>
            <person name="Weinstock G.M."/>
            <person name="Rosenthal A."/>
            <person name="Cox E.C."/>
            <person name="Chisholm R.L."/>
            <person name="Gibbs R.A."/>
            <person name="Loomis W.F."/>
            <person name="Platzer M."/>
            <person name="Kay R.R."/>
            <person name="Williams J.G."/>
            <person name="Dear P.H."/>
            <person name="Noegel A.A."/>
            <person name="Barrell B.G."/>
            <person name="Kuspa A."/>
        </authorList>
    </citation>
    <scope>NUCLEOTIDE SEQUENCE [LARGE SCALE GENOMIC DNA]</scope>
    <source>
        <strain>AX4</strain>
    </source>
</reference>
<reference evidence="5" key="2">
    <citation type="journal article" date="2014" name="Elife">
        <title>Characterization of TSET, an ancient and widespread membrane trafficking complex.</title>
        <authorList>
            <person name="Hirst J."/>
            <person name="Schlacht A."/>
            <person name="Norcott J.P."/>
            <person name="Traynor D."/>
            <person name="Bloomfield G."/>
            <person name="Antrobus R."/>
            <person name="Kay R.R."/>
            <person name="Dacks J.B."/>
            <person name="Robinson M.S."/>
        </authorList>
    </citation>
    <scope>IDENTIFICATION IN THE TSET COMPLEX</scope>
    <scope>IDENTIFICATION BY MASS SPECTROMETRY</scope>
</reference>
<evidence type="ECO:0000255" key="1"/>
<evidence type="ECO:0000256" key="2">
    <source>
        <dbReference type="SAM" id="MobiDB-lite"/>
    </source>
</evidence>
<evidence type="ECO:0000269" key="3">
    <source>
    </source>
</evidence>
<evidence type="ECO:0000303" key="4">
    <source>
    </source>
</evidence>
<evidence type="ECO:0000305" key="5"/>
<evidence type="ECO:0000312" key="6">
    <source>
        <dbReference type="EMBL" id="EAL63648.1"/>
    </source>
</evidence>
<feature type="chain" id="PRO_0000445763" description="TSET complex member tstF">
    <location>
        <begin position="1"/>
        <end position="1122"/>
    </location>
</feature>
<feature type="repeat" description="WD 1" evidence="1">
    <location>
        <begin position="298"/>
        <end position="337"/>
    </location>
</feature>
<feature type="repeat" description="WD 2" evidence="1">
    <location>
        <begin position="342"/>
        <end position="381"/>
    </location>
</feature>
<feature type="repeat" description="WD 3" evidence="1">
    <location>
        <begin position="383"/>
        <end position="422"/>
    </location>
</feature>
<feature type="region of interest" description="Disordered" evidence="2">
    <location>
        <begin position="88"/>
        <end position="131"/>
    </location>
</feature>
<feature type="region of interest" description="Disordered" evidence="2">
    <location>
        <begin position="178"/>
        <end position="215"/>
    </location>
</feature>
<feature type="region of interest" description="Disordered" evidence="2">
    <location>
        <begin position="731"/>
        <end position="775"/>
    </location>
</feature>
<feature type="compositionally biased region" description="Low complexity" evidence="2">
    <location>
        <begin position="88"/>
        <end position="126"/>
    </location>
</feature>
<feature type="compositionally biased region" description="Polar residues" evidence="2">
    <location>
        <begin position="178"/>
        <end position="190"/>
    </location>
</feature>
<feature type="compositionally biased region" description="Low complexity" evidence="2">
    <location>
        <begin position="191"/>
        <end position="215"/>
    </location>
</feature>
<dbReference type="EMBL" id="AAFI01000156">
    <property type="protein sequence ID" value="EAL63648.1"/>
    <property type="molecule type" value="Genomic_DNA"/>
</dbReference>
<dbReference type="RefSeq" id="XP_637150.1">
    <property type="nucleotide sequence ID" value="XM_632058.1"/>
</dbReference>
<dbReference type="STRING" id="44689.Q54K14"/>
<dbReference type="PaxDb" id="44689-DDB0219262"/>
<dbReference type="KEGG" id="ddi:DDB_G0287679"/>
<dbReference type="dictyBase" id="DDB_G0287679">
    <property type="gene designation" value="tstF"/>
</dbReference>
<dbReference type="VEuPathDB" id="AmoebaDB:DDB_G0287679"/>
<dbReference type="eggNOG" id="KOG0267">
    <property type="taxonomic scope" value="Eukaryota"/>
</dbReference>
<dbReference type="HOGENOM" id="CLU_280255_0_0_1"/>
<dbReference type="OMA" id="VECVFVD"/>
<dbReference type="PhylomeDB" id="Q54K14"/>
<dbReference type="PRO" id="PR:Q54K14"/>
<dbReference type="Gene3D" id="2.130.10.10">
    <property type="entry name" value="YVTN repeat-like/Quinoprotein amine dehydrogenase"/>
    <property type="match status" value="1"/>
</dbReference>
<dbReference type="InterPro" id="IPR053290">
    <property type="entry name" value="TSET_complex_member"/>
</dbReference>
<dbReference type="InterPro" id="IPR015943">
    <property type="entry name" value="WD40/YVTN_repeat-like_dom_sf"/>
</dbReference>
<dbReference type="InterPro" id="IPR036322">
    <property type="entry name" value="WD40_repeat_dom_sf"/>
</dbReference>
<dbReference type="InterPro" id="IPR001680">
    <property type="entry name" value="WD40_rpt"/>
</dbReference>
<dbReference type="PANTHER" id="PTHR45521:SF2">
    <property type="entry name" value="TRANSDUCIN_WD40 REPEAT-LIKE SUPERFAMILY PROTEIN"/>
    <property type="match status" value="1"/>
</dbReference>
<dbReference type="PANTHER" id="PTHR45521">
    <property type="entry name" value="TSET COMPLEX MEMBER TSTF"/>
    <property type="match status" value="1"/>
</dbReference>
<dbReference type="Pfam" id="PF00400">
    <property type="entry name" value="WD40"/>
    <property type="match status" value="1"/>
</dbReference>
<dbReference type="SMART" id="SM00320">
    <property type="entry name" value="WD40"/>
    <property type="match status" value="3"/>
</dbReference>
<dbReference type="SUPFAM" id="SSF50978">
    <property type="entry name" value="WD40 repeat-like"/>
    <property type="match status" value="1"/>
</dbReference>
<dbReference type="PROSITE" id="PS00678">
    <property type="entry name" value="WD_REPEATS_1"/>
    <property type="match status" value="1"/>
</dbReference>
<dbReference type="PROSITE" id="PS50082">
    <property type="entry name" value="WD_REPEATS_2"/>
    <property type="match status" value="1"/>
</dbReference>
<dbReference type="PROSITE" id="PS50294">
    <property type="entry name" value="WD_REPEATS_REGION"/>
    <property type="match status" value="1"/>
</dbReference>
<protein>
    <recommendedName>
        <fullName evidence="5">TSET complex member tstF</fullName>
    </recommendedName>
    <alternativeName>
        <fullName evidence="4">Protein TTRAY2</fullName>
    </alternativeName>
</protein>
<organism>
    <name type="scientific">Dictyostelium discoideum</name>
    <name type="common">Social amoeba</name>
    <dbReference type="NCBI Taxonomy" id="44689"/>
    <lineage>
        <taxon>Eukaryota</taxon>
        <taxon>Amoebozoa</taxon>
        <taxon>Evosea</taxon>
        <taxon>Eumycetozoa</taxon>
        <taxon>Dictyostelia</taxon>
        <taxon>Dictyosteliales</taxon>
        <taxon>Dictyosteliaceae</taxon>
        <taxon>Dictyostelium</taxon>
    </lineage>
</organism>
<proteinExistence type="evidence at protein level"/>
<gene>
    <name evidence="4" type="primary">tstF</name>
    <name evidence="6" type="ORF">DDB0219262</name>
</gene>
<accession>Q54K14</accession>
<comment type="subunit">
    <text evidence="3">Component of the TSET complex, a heterohexamer composed of tstA, tstB, tstC, tstD, tstE and tstF, which may act in plasma membrane turnover. tstA, tstB, tstC and tstD are likely to be the core complex members with tstE and tstF acting as associated scaffold proteins.</text>
</comment>